<organism>
    <name type="scientific">Escherichia coli O157:H7</name>
    <dbReference type="NCBI Taxonomy" id="83334"/>
    <lineage>
        <taxon>Bacteria</taxon>
        <taxon>Pseudomonadati</taxon>
        <taxon>Pseudomonadota</taxon>
        <taxon>Gammaproteobacteria</taxon>
        <taxon>Enterobacterales</taxon>
        <taxon>Enterobacteriaceae</taxon>
        <taxon>Escherichia</taxon>
    </lineage>
</organism>
<gene>
    <name type="primary">cheW</name>
    <name type="ordered locus">Z2941</name>
    <name type="ordered locus">ECs2597</name>
</gene>
<dbReference type="EMBL" id="AE005174">
    <property type="protein sequence ID" value="AAG56877.1"/>
    <property type="molecule type" value="Genomic_DNA"/>
</dbReference>
<dbReference type="EMBL" id="BA000007">
    <property type="protein sequence ID" value="BAB36020.1"/>
    <property type="molecule type" value="Genomic_DNA"/>
</dbReference>
<dbReference type="PIR" id="E90953">
    <property type="entry name" value="E90953"/>
</dbReference>
<dbReference type="RefSeq" id="NP_310624.1">
    <property type="nucleotide sequence ID" value="NC_002695.1"/>
</dbReference>
<dbReference type="RefSeq" id="WP_000147302.1">
    <property type="nucleotide sequence ID" value="NZ_VOAI01000010.1"/>
</dbReference>
<dbReference type="BMRB" id="P0A966"/>
<dbReference type="SMR" id="P0A966"/>
<dbReference type="STRING" id="155864.Z2941"/>
<dbReference type="GeneID" id="914106"/>
<dbReference type="GeneID" id="93776192"/>
<dbReference type="KEGG" id="ece:Z2941"/>
<dbReference type="KEGG" id="ecs:ECs_2597"/>
<dbReference type="PATRIC" id="fig|386585.9.peg.2723"/>
<dbReference type="eggNOG" id="COG0835">
    <property type="taxonomic scope" value="Bacteria"/>
</dbReference>
<dbReference type="HOGENOM" id="CLU_048995_1_0_6"/>
<dbReference type="OMA" id="CVNIMSV"/>
<dbReference type="Proteomes" id="UP000000558">
    <property type="component" value="Chromosome"/>
</dbReference>
<dbReference type="Proteomes" id="UP000002519">
    <property type="component" value="Chromosome"/>
</dbReference>
<dbReference type="GO" id="GO:0005829">
    <property type="term" value="C:cytosol"/>
    <property type="evidence" value="ECO:0007669"/>
    <property type="project" value="TreeGrafter"/>
</dbReference>
<dbReference type="GO" id="GO:0006935">
    <property type="term" value="P:chemotaxis"/>
    <property type="evidence" value="ECO:0007669"/>
    <property type="project" value="UniProtKB-KW"/>
</dbReference>
<dbReference type="GO" id="GO:0007165">
    <property type="term" value="P:signal transduction"/>
    <property type="evidence" value="ECO:0007669"/>
    <property type="project" value="InterPro"/>
</dbReference>
<dbReference type="CDD" id="cd00732">
    <property type="entry name" value="CheW"/>
    <property type="match status" value="1"/>
</dbReference>
<dbReference type="FunFam" id="2.40.50.180:FF:000002">
    <property type="entry name" value="Chemotaxis protein CheW"/>
    <property type="match status" value="1"/>
</dbReference>
<dbReference type="Gene3D" id="2.40.50.180">
    <property type="entry name" value="CheA-289, Domain 4"/>
    <property type="match status" value="1"/>
</dbReference>
<dbReference type="Gene3D" id="2.30.30.40">
    <property type="entry name" value="SH3 Domains"/>
    <property type="match status" value="1"/>
</dbReference>
<dbReference type="InterPro" id="IPR039315">
    <property type="entry name" value="CheW"/>
</dbReference>
<dbReference type="InterPro" id="IPR036061">
    <property type="entry name" value="CheW-like_dom_sf"/>
</dbReference>
<dbReference type="InterPro" id="IPR002545">
    <property type="entry name" value="CheW-lke_dom"/>
</dbReference>
<dbReference type="NCBIfam" id="NF007903">
    <property type="entry name" value="PRK10612.1"/>
    <property type="match status" value="1"/>
</dbReference>
<dbReference type="PANTHER" id="PTHR22617:SF45">
    <property type="entry name" value="CHEMOTAXIS PROTEIN CHEW"/>
    <property type="match status" value="1"/>
</dbReference>
<dbReference type="PANTHER" id="PTHR22617">
    <property type="entry name" value="CHEMOTAXIS SENSOR HISTIDINE KINASE-RELATED"/>
    <property type="match status" value="1"/>
</dbReference>
<dbReference type="Pfam" id="PF01584">
    <property type="entry name" value="CheW"/>
    <property type="match status" value="1"/>
</dbReference>
<dbReference type="SMART" id="SM00260">
    <property type="entry name" value="CheW"/>
    <property type="match status" value="1"/>
</dbReference>
<dbReference type="SUPFAM" id="SSF50341">
    <property type="entry name" value="CheW-like"/>
    <property type="match status" value="1"/>
</dbReference>
<dbReference type="PROSITE" id="PS50851">
    <property type="entry name" value="CHEW"/>
    <property type="match status" value="1"/>
</dbReference>
<proteinExistence type="inferred from homology"/>
<sequence>MTGMTNVTKLASEPSGQEFLVFTLGDEEYGIDILKVQEIRGYDQVTRIANTPAFIKGVTNLRGVIVPIVDLRIKFSQVDVDYNDNTVVIVLNLGQRVVGIVVDGVSDVLSLTAEQIRPAPEFAVTLSTEYLTGLGALGDRMLILVNIEKLLNSEEMALLDSAASEVA</sequence>
<accession>P0A966</accession>
<accession>P07365</accession>
<evidence type="ECO:0000250" key="1"/>
<evidence type="ECO:0000255" key="2">
    <source>
        <dbReference type="PROSITE-ProRule" id="PRU00052"/>
    </source>
</evidence>
<feature type="chain" id="PRO_0000198342" description="Chemotaxis protein CheW">
    <location>
        <begin position="1"/>
        <end position="167"/>
    </location>
</feature>
<feature type="domain" description="CheW-like" evidence="2">
    <location>
        <begin position="16"/>
        <end position="156"/>
    </location>
</feature>
<keyword id="KW-0145">Chemotaxis</keyword>
<keyword id="KW-0963">Cytoplasm</keyword>
<keyword id="KW-1185">Reference proteome</keyword>
<protein>
    <recommendedName>
        <fullName>Chemotaxis protein CheW</fullName>
    </recommendedName>
</protein>
<name>CHEW_ECO57</name>
<reference key="1">
    <citation type="journal article" date="2001" name="Nature">
        <title>Genome sequence of enterohaemorrhagic Escherichia coli O157:H7.</title>
        <authorList>
            <person name="Perna N.T."/>
            <person name="Plunkett G. III"/>
            <person name="Burland V."/>
            <person name="Mau B."/>
            <person name="Glasner J.D."/>
            <person name="Rose D.J."/>
            <person name="Mayhew G.F."/>
            <person name="Evans P.S."/>
            <person name="Gregor J."/>
            <person name="Kirkpatrick H.A."/>
            <person name="Posfai G."/>
            <person name="Hackett J."/>
            <person name="Klink S."/>
            <person name="Boutin A."/>
            <person name="Shao Y."/>
            <person name="Miller L."/>
            <person name="Grotbeck E.J."/>
            <person name="Davis N.W."/>
            <person name="Lim A."/>
            <person name="Dimalanta E.T."/>
            <person name="Potamousis K."/>
            <person name="Apodaca J."/>
            <person name="Anantharaman T.S."/>
            <person name="Lin J."/>
            <person name="Yen G."/>
            <person name="Schwartz D.C."/>
            <person name="Welch R.A."/>
            <person name="Blattner F.R."/>
        </authorList>
    </citation>
    <scope>NUCLEOTIDE SEQUENCE [LARGE SCALE GENOMIC DNA]</scope>
    <source>
        <strain>O157:H7 / EDL933 / ATCC 700927 / EHEC</strain>
    </source>
</reference>
<reference key="2">
    <citation type="journal article" date="2001" name="DNA Res.">
        <title>Complete genome sequence of enterohemorrhagic Escherichia coli O157:H7 and genomic comparison with a laboratory strain K-12.</title>
        <authorList>
            <person name="Hayashi T."/>
            <person name="Makino K."/>
            <person name="Ohnishi M."/>
            <person name="Kurokawa K."/>
            <person name="Ishii K."/>
            <person name="Yokoyama K."/>
            <person name="Han C.-G."/>
            <person name="Ohtsubo E."/>
            <person name="Nakayama K."/>
            <person name="Murata T."/>
            <person name="Tanaka M."/>
            <person name="Tobe T."/>
            <person name="Iida T."/>
            <person name="Takami H."/>
            <person name="Honda T."/>
            <person name="Sasakawa C."/>
            <person name="Ogasawara N."/>
            <person name="Yasunaga T."/>
            <person name="Kuhara S."/>
            <person name="Shiba T."/>
            <person name="Hattori M."/>
            <person name="Shinagawa H."/>
        </authorList>
    </citation>
    <scope>NUCLEOTIDE SEQUENCE [LARGE SCALE GENOMIC DNA]</scope>
    <source>
        <strain>O157:H7 / Sakai / RIMD 0509952 / EHEC</strain>
    </source>
</reference>
<comment type="function">
    <text evidence="1">Involved in the transmission of sensory signals from the chemoreceptors to the flagellar motors. It physically bridges CheA to the MCPs (methyl-accepting chemotaxis proteins) to allow regulated phosphotransfer to CheY and CheB (By similarity).</text>
</comment>
<comment type="subunit">
    <text evidence="1">An in vitro complex of CheW/CheA(L)/CheA(S) in a 1:1:1 ratio increases the autophosphorylation of CheA and is required for the binding of CheY, the phosphorylation substrate. This complex accounts for 10% of the total number of molecules (By similarity).</text>
</comment>
<comment type="subcellular location">
    <subcellularLocation>
        <location evidence="1">Cytoplasm</location>
    </subcellularLocation>
</comment>